<reference key="1">
    <citation type="journal article" date="1998" name="Microbiology">
        <title>The 172 kb prkA-addAB region from 83 degrees to 97 degrees of the Bacillus subtilis chromosome contains several dysfunctional genes, the glyB marker, many genes encoding transporter proteins, and the ubiquitous hit gene.</title>
        <authorList>
            <person name="Noback M.A."/>
            <person name="Holsappel S."/>
            <person name="Kiewiet R."/>
            <person name="Terpstra P."/>
            <person name="Wambutt R."/>
            <person name="Wedler H."/>
            <person name="Venema G."/>
            <person name="Bron S."/>
        </authorList>
    </citation>
    <scope>NUCLEOTIDE SEQUENCE [GENOMIC DNA]</scope>
    <source>
        <strain>168</strain>
    </source>
</reference>
<reference key="2">
    <citation type="journal article" date="1997" name="Nature">
        <title>The complete genome sequence of the Gram-positive bacterium Bacillus subtilis.</title>
        <authorList>
            <person name="Kunst F."/>
            <person name="Ogasawara N."/>
            <person name="Moszer I."/>
            <person name="Albertini A.M."/>
            <person name="Alloni G."/>
            <person name="Azevedo V."/>
            <person name="Bertero M.G."/>
            <person name="Bessieres P."/>
            <person name="Bolotin A."/>
            <person name="Borchert S."/>
            <person name="Borriss R."/>
            <person name="Boursier L."/>
            <person name="Brans A."/>
            <person name="Braun M."/>
            <person name="Brignell S.C."/>
            <person name="Bron S."/>
            <person name="Brouillet S."/>
            <person name="Bruschi C.V."/>
            <person name="Caldwell B."/>
            <person name="Capuano V."/>
            <person name="Carter N.M."/>
            <person name="Choi S.-K."/>
            <person name="Codani J.-J."/>
            <person name="Connerton I.F."/>
            <person name="Cummings N.J."/>
            <person name="Daniel R.A."/>
            <person name="Denizot F."/>
            <person name="Devine K.M."/>
            <person name="Duesterhoeft A."/>
            <person name="Ehrlich S.D."/>
            <person name="Emmerson P.T."/>
            <person name="Entian K.-D."/>
            <person name="Errington J."/>
            <person name="Fabret C."/>
            <person name="Ferrari E."/>
            <person name="Foulger D."/>
            <person name="Fritz C."/>
            <person name="Fujita M."/>
            <person name="Fujita Y."/>
            <person name="Fuma S."/>
            <person name="Galizzi A."/>
            <person name="Galleron N."/>
            <person name="Ghim S.-Y."/>
            <person name="Glaser P."/>
            <person name="Goffeau A."/>
            <person name="Golightly E.J."/>
            <person name="Grandi G."/>
            <person name="Guiseppi G."/>
            <person name="Guy B.J."/>
            <person name="Haga K."/>
            <person name="Haiech J."/>
            <person name="Harwood C.R."/>
            <person name="Henaut A."/>
            <person name="Hilbert H."/>
            <person name="Holsappel S."/>
            <person name="Hosono S."/>
            <person name="Hullo M.-F."/>
            <person name="Itaya M."/>
            <person name="Jones L.-M."/>
            <person name="Joris B."/>
            <person name="Karamata D."/>
            <person name="Kasahara Y."/>
            <person name="Klaerr-Blanchard M."/>
            <person name="Klein C."/>
            <person name="Kobayashi Y."/>
            <person name="Koetter P."/>
            <person name="Koningstein G."/>
            <person name="Krogh S."/>
            <person name="Kumano M."/>
            <person name="Kurita K."/>
            <person name="Lapidus A."/>
            <person name="Lardinois S."/>
            <person name="Lauber J."/>
            <person name="Lazarevic V."/>
            <person name="Lee S.-M."/>
            <person name="Levine A."/>
            <person name="Liu H."/>
            <person name="Masuda S."/>
            <person name="Mauel C."/>
            <person name="Medigue C."/>
            <person name="Medina N."/>
            <person name="Mellado R.P."/>
            <person name="Mizuno M."/>
            <person name="Moestl D."/>
            <person name="Nakai S."/>
            <person name="Noback M."/>
            <person name="Noone D."/>
            <person name="O'Reilly M."/>
            <person name="Ogawa K."/>
            <person name="Ogiwara A."/>
            <person name="Oudega B."/>
            <person name="Park S.-H."/>
            <person name="Parro V."/>
            <person name="Pohl T.M."/>
            <person name="Portetelle D."/>
            <person name="Porwollik S."/>
            <person name="Prescott A.M."/>
            <person name="Presecan E."/>
            <person name="Pujic P."/>
            <person name="Purnelle B."/>
            <person name="Rapoport G."/>
            <person name="Rey M."/>
            <person name="Reynolds S."/>
            <person name="Rieger M."/>
            <person name="Rivolta C."/>
            <person name="Rocha E."/>
            <person name="Roche B."/>
            <person name="Rose M."/>
            <person name="Sadaie Y."/>
            <person name="Sato T."/>
            <person name="Scanlan E."/>
            <person name="Schleich S."/>
            <person name="Schroeter R."/>
            <person name="Scoffone F."/>
            <person name="Sekiguchi J."/>
            <person name="Sekowska A."/>
            <person name="Seror S.J."/>
            <person name="Serror P."/>
            <person name="Shin B.-S."/>
            <person name="Soldo B."/>
            <person name="Sorokin A."/>
            <person name="Tacconi E."/>
            <person name="Takagi T."/>
            <person name="Takahashi H."/>
            <person name="Takemaru K."/>
            <person name="Takeuchi M."/>
            <person name="Tamakoshi A."/>
            <person name="Tanaka T."/>
            <person name="Terpstra P."/>
            <person name="Tognoni A."/>
            <person name="Tosato V."/>
            <person name="Uchiyama S."/>
            <person name="Vandenbol M."/>
            <person name="Vannier F."/>
            <person name="Vassarotti A."/>
            <person name="Viari A."/>
            <person name="Wambutt R."/>
            <person name="Wedler E."/>
            <person name="Wedler H."/>
            <person name="Weitzenegger T."/>
            <person name="Winters P."/>
            <person name="Wipat A."/>
            <person name="Yamamoto H."/>
            <person name="Yamane K."/>
            <person name="Yasumoto K."/>
            <person name="Yata K."/>
            <person name="Yoshida K."/>
            <person name="Yoshikawa H.-F."/>
            <person name="Zumstein E."/>
            <person name="Yoshikawa H."/>
            <person name="Danchin A."/>
        </authorList>
    </citation>
    <scope>NUCLEOTIDE SEQUENCE [LARGE SCALE GENOMIC DNA]</scope>
    <source>
        <strain>168</strain>
    </source>
</reference>
<reference key="3">
    <citation type="journal article" date="2006" name="FEMS Microbiol. Lett.">
        <title>The putative ABC transporter YheH/YheI is involved in the signalling pathway that activates KinA during sporulation initiation.</title>
        <authorList>
            <person name="Fukushima S."/>
            <person name="Yoshimura M."/>
            <person name="Chibazakura T."/>
            <person name="Sato T."/>
            <person name="Yoshikawa H."/>
        </authorList>
    </citation>
    <scope>OVEREXPRESSION</scope>
    <source>
        <strain>168</strain>
    </source>
</reference>
<reference key="4">
    <citation type="journal article" date="2009" name="Biochim. Biophys. Acta">
        <title>The YheI/YheH heterodimer from Bacillus subtilis is a multidrug ABC transporter.</title>
        <authorList>
            <person name="Torres C."/>
            <person name="Galian C."/>
            <person name="Freiberg C."/>
            <person name="Fantino J.-R."/>
            <person name="Jault J.-M."/>
        </authorList>
    </citation>
    <scope>FUNCTION AS A TRANSPORTER</scope>
    <scope>ATPASE ACTIVITY</scope>
    <scope>ACTIVITY REGULATION</scope>
    <scope>SUBUNIT</scope>
    <scope>SUBCELLULAR LOCATION</scope>
    <scope>INDUCTION</scope>
    <source>
        <strain>168</strain>
    </source>
</reference>
<keyword id="KW-0002">3D-structure</keyword>
<keyword id="KW-0046">Antibiotic resistance</keyword>
<keyword id="KW-0067">ATP-binding</keyword>
<keyword id="KW-1003">Cell membrane</keyword>
<keyword id="KW-0472">Membrane</keyword>
<keyword id="KW-0547">Nucleotide-binding</keyword>
<keyword id="KW-1185">Reference proteome</keyword>
<keyword id="KW-1278">Translocase</keyword>
<keyword id="KW-0812">Transmembrane</keyword>
<keyword id="KW-1133">Transmembrane helix</keyword>
<keyword id="KW-0813">Transport</keyword>
<comment type="function">
    <text evidence="3">Involved in the transport of four structurally unrelated drugs, including doxorubicin and mitoxantrone. Transmembrane domains (TMD) form a pore in the membrane and the ATP-binding domain (NBD) is responsible for energy generation.</text>
</comment>
<comment type="activity regulation">
    <text evidence="3">Inhibited by ortho-vanadate.</text>
</comment>
<comment type="subunit">
    <text evidence="3">Heterodimer composed of YheH and YheI.</text>
</comment>
<comment type="subcellular location">
    <subcellularLocation>
        <location evidence="3">Cell membrane</location>
        <topology evidence="2 3">Multi-pass membrane protein</topology>
    </subcellularLocation>
</comment>
<comment type="induction">
    <text evidence="3">Induced by several classes of structurally unrelated antibiotics, such as erythromycin, fusidic acid or linezolid.</text>
</comment>
<comment type="miscellaneous">
    <text>Overexpression reduces the sporulation efficiency possibly by modulating the function of KinA.</text>
</comment>
<comment type="similarity">
    <text evidence="4">Belongs to the ABC transporter superfamily.</text>
</comment>
<protein>
    <recommendedName>
        <fullName>Probable multidrug resistance ABC transporter ATP-binding/permease protein YheI</fullName>
        <ecNumber>7.6.2.-</ecNumber>
    </recommendedName>
</protein>
<proteinExistence type="evidence at protein level"/>
<dbReference type="EC" id="7.6.2.-"/>
<dbReference type="EMBL" id="Y14080">
    <property type="protein sequence ID" value="CAA74450.1"/>
    <property type="molecule type" value="Genomic_DNA"/>
</dbReference>
<dbReference type="EMBL" id="AL009126">
    <property type="protein sequence ID" value="CAB12810.1"/>
    <property type="molecule type" value="Genomic_DNA"/>
</dbReference>
<dbReference type="PIR" id="A69829">
    <property type="entry name" value="A69829"/>
</dbReference>
<dbReference type="PDB" id="7M33">
    <property type="method" value="EM"/>
    <property type="resolution" value="3.55 A"/>
    <property type="chains" value="C=2-585"/>
</dbReference>
<dbReference type="PDB" id="8FHK">
    <property type="method" value="EM"/>
    <property type="resolution" value="2.90 A"/>
    <property type="chains" value="C=2-585"/>
</dbReference>
<dbReference type="PDB" id="8FMV">
    <property type="method" value="EM"/>
    <property type="resolution" value="3.34 A"/>
    <property type="chains" value="C=2-585"/>
</dbReference>
<dbReference type="PDB" id="8FPF">
    <property type="method" value="EM"/>
    <property type="resolution" value="3.27 A"/>
    <property type="chains" value="C=2-585"/>
</dbReference>
<dbReference type="PDB" id="8SZC">
    <property type="method" value="EM"/>
    <property type="resolution" value="3.06 A"/>
    <property type="chains" value="C=2-585"/>
</dbReference>
<dbReference type="PDB" id="8T1P">
    <property type="method" value="EM"/>
    <property type="resolution" value="2.96 A"/>
    <property type="chains" value="C=2-585"/>
</dbReference>
<dbReference type="PDB" id="8T3K">
    <property type="method" value="EM"/>
    <property type="resolution" value="3.33 A"/>
    <property type="chains" value="C=2-585"/>
</dbReference>
<dbReference type="PDBsum" id="7M33"/>
<dbReference type="PDBsum" id="8FHK"/>
<dbReference type="PDBsum" id="8FMV"/>
<dbReference type="PDBsum" id="8FPF"/>
<dbReference type="PDBsum" id="8SZC"/>
<dbReference type="PDBsum" id="8T1P"/>
<dbReference type="PDBsum" id="8T3K"/>
<dbReference type="EMDB" id="EMD-23641"/>
<dbReference type="EMDB" id="EMD-29087"/>
<dbReference type="EMDB" id="EMD-29297"/>
<dbReference type="EMDB" id="EMD-29362"/>
<dbReference type="EMDB" id="EMD-40908"/>
<dbReference type="EMDB" id="EMD-40974"/>
<dbReference type="EMDB" id="EMD-41004"/>
<dbReference type="SMR" id="O07550"/>
<dbReference type="FunCoup" id="O07550">
    <property type="interactions" value="195"/>
</dbReference>
<dbReference type="STRING" id="224308.BSU09710"/>
<dbReference type="TCDB" id="3.A.1.106.8">
    <property type="family name" value="the atp-binding cassette (abc) superfamily"/>
</dbReference>
<dbReference type="PaxDb" id="224308-BSU09710"/>
<dbReference type="EnsemblBacteria" id="CAB12810">
    <property type="protein sequence ID" value="CAB12810"/>
    <property type="gene ID" value="BSU_09710"/>
</dbReference>
<dbReference type="GeneID" id="936278"/>
<dbReference type="KEGG" id="bsu:BSU09710"/>
<dbReference type="PATRIC" id="fig|224308.179.peg.1044"/>
<dbReference type="eggNOG" id="COG1132">
    <property type="taxonomic scope" value="Bacteria"/>
</dbReference>
<dbReference type="InParanoid" id="O07550"/>
<dbReference type="OrthoDB" id="9770415at2"/>
<dbReference type="PhylomeDB" id="O07550"/>
<dbReference type="BioCyc" id="BSUB:BSU09710-MONOMER"/>
<dbReference type="Proteomes" id="UP000001570">
    <property type="component" value="Chromosome"/>
</dbReference>
<dbReference type="GO" id="GO:0005886">
    <property type="term" value="C:plasma membrane"/>
    <property type="evidence" value="ECO:0007669"/>
    <property type="project" value="UniProtKB-SubCell"/>
</dbReference>
<dbReference type="GO" id="GO:0140359">
    <property type="term" value="F:ABC-type transporter activity"/>
    <property type="evidence" value="ECO:0007669"/>
    <property type="project" value="InterPro"/>
</dbReference>
<dbReference type="GO" id="GO:0005524">
    <property type="term" value="F:ATP binding"/>
    <property type="evidence" value="ECO:0007669"/>
    <property type="project" value="UniProtKB-KW"/>
</dbReference>
<dbReference type="GO" id="GO:0016887">
    <property type="term" value="F:ATP hydrolysis activity"/>
    <property type="evidence" value="ECO:0007669"/>
    <property type="project" value="InterPro"/>
</dbReference>
<dbReference type="GO" id="GO:0042626">
    <property type="term" value="F:ATPase-coupled transmembrane transporter activity"/>
    <property type="evidence" value="ECO:0000318"/>
    <property type="project" value="GO_Central"/>
</dbReference>
<dbReference type="GO" id="GO:0046677">
    <property type="term" value="P:response to antibiotic"/>
    <property type="evidence" value="ECO:0007669"/>
    <property type="project" value="UniProtKB-KW"/>
</dbReference>
<dbReference type="GO" id="GO:0055085">
    <property type="term" value="P:transmembrane transport"/>
    <property type="evidence" value="ECO:0000318"/>
    <property type="project" value="GO_Central"/>
</dbReference>
<dbReference type="CDD" id="cd18541">
    <property type="entry name" value="ABC_6TM_TmrB_like"/>
    <property type="match status" value="1"/>
</dbReference>
<dbReference type="FunFam" id="1.20.1560.10:FF:000011">
    <property type="entry name" value="Multidrug ABC transporter ATP-binding protein"/>
    <property type="match status" value="1"/>
</dbReference>
<dbReference type="FunFam" id="3.40.50.300:FF:000221">
    <property type="entry name" value="Multidrug ABC transporter ATP-binding protein"/>
    <property type="match status" value="1"/>
</dbReference>
<dbReference type="Gene3D" id="1.20.1560.10">
    <property type="entry name" value="ABC transporter type 1, transmembrane domain"/>
    <property type="match status" value="1"/>
</dbReference>
<dbReference type="Gene3D" id="3.40.50.300">
    <property type="entry name" value="P-loop containing nucleotide triphosphate hydrolases"/>
    <property type="match status" value="1"/>
</dbReference>
<dbReference type="InterPro" id="IPR003593">
    <property type="entry name" value="AAA+_ATPase"/>
</dbReference>
<dbReference type="InterPro" id="IPR011527">
    <property type="entry name" value="ABC1_TM_dom"/>
</dbReference>
<dbReference type="InterPro" id="IPR036640">
    <property type="entry name" value="ABC1_TM_sf"/>
</dbReference>
<dbReference type="InterPro" id="IPR003439">
    <property type="entry name" value="ABC_transporter-like_ATP-bd"/>
</dbReference>
<dbReference type="InterPro" id="IPR017871">
    <property type="entry name" value="ABC_transporter-like_CS"/>
</dbReference>
<dbReference type="InterPro" id="IPR027417">
    <property type="entry name" value="P-loop_NTPase"/>
</dbReference>
<dbReference type="InterPro" id="IPR039421">
    <property type="entry name" value="Type_1_exporter"/>
</dbReference>
<dbReference type="PANTHER" id="PTHR43394:SF1">
    <property type="entry name" value="ATP-BINDING CASSETTE SUB-FAMILY B MEMBER 10, MITOCHONDRIAL"/>
    <property type="match status" value="1"/>
</dbReference>
<dbReference type="PANTHER" id="PTHR43394">
    <property type="entry name" value="ATP-DEPENDENT PERMEASE MDL1, MITOCHONDRIAL"/>
    <property type="match status" value="1"/>
</dbReference>
<dbReference type="Pfam" id="PF00664">
    <property type="entry name" value="ABC_membrane"/>
    <property type="match status" value="1"/>
</dbReference>
<dbReference type="Pfam" id="PF00005">
    <property type="entry name" value="ABC_tran"/>
    <property type="match status" value="1"/>
</dbReference>
<dbReference type="SMART" id="SM00382">
    <property type="entry name" value="AAA"/>
    <property type="match status" value="1"/>
</dbReference>
<dbReference type="SUPFAM" id="SSF90123">
    <property type="entry name" value="ABC transporter transmembrane region"/>
    <property type="match status" value="1"/>
</dbReference>
<dbReference type="SUPFAM" id="SSF52540">
    <property type="entry name" value="P-loop containing nucleoside triphosphate hydrolases"/>
    <property type="match status" value="1"/>
</dbReference>
<dbReference type="PROSITE" id="PS50929">
    <property type="entry name" value="ABC_TM1F"/>
    <property type="match status" value="1"/>
</dbReference>
<dbReference type="PROSITE" id="PS00211">
    <property type="entry name" value="ABC_TRANSPORTER_1"/>
    <property type="match status" value="1"/>
</dbReference>
<dbReference type="PROSITE" id="PS50893">
    <property type="entry name" value="ABC_TRANSPORTER_2"/>
    <property type="match status" value="1"/>
</dbReference>
<sequence length="585" mass="65112">MFSVLKKLGWFFKAYWLRYTIAIVLLLAVNVIEMFPPKLLGNAIDDMKAGAFTAEGLLFYIGIFFVLTAAVYIMSYFWMHQLFGGANLMEKILRTKLMGHLLTMSPPFYEKNRTGDLMARGTNDLQAVSLTTGFGILTLVDSTMFMMTIFLTMGFLISWKLTFAAIIPLPVMAIAISLYGSKIHERFTEAQNAFGALNDRVLESVSGVRVIRAYVQETNDVRRFNEMTADVYQKNMKVAFIDSLFEPTVKLLVGASYLIGLGYGAFLVFRNELTLGELVSFNVYLGMMIWPMFAIGELINVMQRGNASLDRVNETLSYETDVTDPKQPADLKEPGDIVFSHVSFTYPSSTSDNLQDISFTVRKGQTVGIAGKTGSGKTTIIKQLLRQYPPGEGSITFSGVPIQQIPLDRLRGWIGYVPQDHLLFSRTVKENILYGKQDATDKEVQQAIAEAHFEKDLHMLPSGLETMVGEKGVALSGGQKQRISIARALMANPEILILDDSLSAVDAKTEAAIIKNIRENRKGKTTFILTHRLSAVEHADLILVMDGGVIAERGTHQELLANNGWYREQYERQQLFTAEEGGAGA</sequence>
<name>YHEI_BACSU</name>
<organism>
    <name type="scientific">Bacillus subtilis (strain 168)</name>
    <dbReference type="NCBI Taxonomy" id="224308"/>
    <lineage>
        <taxon>Bacteria</taxon>
        <taxon>Bacillati</taxon>
        <taxon>Bacillota</taxon>
        <taxon>Bacilli</taxon>
        <taxon>Bacillales</taxon>
        <taxon>Bacillaceae</taxon>
        <taxon>Bacillus</taxon>
    </lineage>
</organism>
<evidence type="ECO:0000255" key="1">
    <source>
        <dbReference type="PROSITE-ProRule" id="PRU00434"/>
    </source>
</evidence>
<evidence type="ECO:0000255" key="2">
    <source>
        <dbReference type="PROSITE-ProRule" id="PRU00441"/>
    </source>
</evidence>
<evidence type="ECO:0000269" key="3">
    <source>
    </source>
</evidence>
<evidence type="ECO:0000305" key="4"/>
<evidence type="ECO:0007829" key="5">
    <source>
        <dbReference type="PDB" id="8FHK"/>
    </source>
</evidence>
<evidence type="ECO:0007829" key="6">
    <source>
        <dbReference type="PDB" id="8FPF"/>
    </source>
</evidence>
<evidence type="ECO:0007829" key="7">
    <source>
        <dbReference type="PDB" id="8T1P"/>
    </source>
</evidence>
<feature type="chain" id="PRO_0000376079" description="Probable multidrug resistance ABC transporter ATP-binding/permease protein YheI">
    <location>
        <begin position="1"/>
        <end position="585"/>
    </location>
</feature>
<feature type="transmembrane region" description="Helical" evidence="2">
    <location>
        <begin position="21"/>
        <end position="41"/>
    </location>
</feature>
<feature type="transmembrane region" description="Helical" evidence="2">
    <location>
        <begin position="57"/>
        <end position="77"/>
    </location>
</feature>
<feature type="transmembrane region" description="Helical" evidence="2">
    <location>
        <begin position="127"/>
        <end position="147"/>
    </location>
</feature>
<feature type="transmembrane region" description="Helical" evidence="2">
    <location>
        <begin position="149"/>
        <end position="169"/>
    </location>
</feature>
<feature type="transmembrane region" description="Helical" evidence="2">
    <location>
        <begin position="249"/>
        <end position="269"/>
    </location>
</feature>
<feature type="transmembrane region" description="Helical" evidence="2">
    <location>
        <begin position="279"/>
        <end position="299"/>
    </location>
</feature>
<feature type="domain" description="ABC transmembrane type-1" evidence="2">
    <location>
        <begin position="19"/>
        <end position="304"/>
    </location>
</feature>
<feature type="domain" description="ABC transporter" evidence="1">
    <location>
        <begin position="337"/>
        <end position="572"/>
    </location>
</feature>
<feature type="binding site" evidence="1">
    <location>
        <begin position="371"/>
        <end position="378"/>
    </location>
    <ligand>
        <name>ATP</name>
        <dbReference type="ChEBI" id="CHEBI:30616"/>
    </ligand>
</feature>
<feature type="helix" evidence="5">
    <location>
        <begin position="4"/>
        <end position="14"/>
    </location>
</feature>
<feature type="helix" evidence="5">
    <location>
        <begin position="20"/>
        <end position="48"/>
    </location>
</feature>
<feature type="helix" evidence="5">
    <location>
        <begin position="54"/>
        <end position="101"/>
    </location>
</feature>
<feature type="helix" evidence="5">
    <location>
        <begin position="106"/>
        <end position="108"/>
    </location>
</feature>
<feature type="turn" evidence="5">
    <location>
        <begin position="109"/>
        <end position="111"/>
    </location>
</feature>
<feature type="helix" evidence="5">
    <location>
        <begin position="114"/>
        <end position="156"/>
    </location>
</feature>
<feature type="turn" evidence="5">
    <location>
        <begin position="161"/>
        <end position="168"/>
    </location>
</feature>
<feature type="helix" evidence="5">
    <location>
        <begin position="169"/>
        <end position="206"/>
    </location>
</feature>
<feature type="helix" evidence="5">
    <location>
        <begin position="209"/>
        <end position="212"/>
    </location>
</feature>
<feature type="turn" evidence="5">
    <location>
        <begin position="213"/>
        <end position="215"/>
    </location>
</feature>
<feature type="helix" evidence="5">
    <location>
        <begin position="217"/>
        <end position="269"/>
    </location>
</feature>
<feature type="helix" evidence="5">
    <location>
        <begin position="275"/>
        <end position="289"/>
    </location>
</feature>
<feature type="helix" evidence="5">
    <location>
        <begin position="290"/>
        <end position="294"/>
    </location>
</feature>
<feature type="helix" evidence="5">
    <location>
        <begin position="295"/>
        <end position="316"/>
    </location>
</feature>
<feature type="turn" evidence="5">
    <location>
        <begin position="319"/>
        <end position="322"/>
    </location>
</feature>
<feature type="strand" evidence="7">
    <location>
        <begin position="337"/>
        <end position="342"/>
    </location>
</feature>
<feature type="strand" evidence="6">
    <location>
        <begin position="357"/>
        <end position="361"/>
    </location>
</feature>
<feature type="strand" evidence="5">
    <location>
        <begin position="367"/>
        <end position="369"/>
    </location>
</feature>
<feature type="helix" evidence="5">
    <location>
        <begin position="377"/>
        <end position="385"/>
    </location>
</feature>
<feature type="strand" evidence="7">
    <location>
        <begin position="392"/>
        <end position="397"/>
    </location>
</feature>
<feature type="strand" evidence="5">
    <location>
        <begin position="402"/>
        <end position="405"/>
    </location>
</feature>
<feature type="helix" evidence="5">
    <location>
        <begin position="407"/>
        <end position="413"/>
    </location>
</feature>
<feature type="strand" evidence="7">
    <location>
        <begin position="414"/>
        <end position="416"/>
    </location>
</feature>
<feature type="strand" evidence="5">
    <location>
        <begin position="425"/>
        <end position="427"/>
    </location>
</feature>
<feature type="helix" evidence="5">
    <location>
        <begin position="428"/>
        <end position="432"/>
    </location>
</feature>
<feature type="strand" evidence="5">
    <location>
        <begin position="435"/>
        <end position="438"/>
    </location>
</feature>
<feature type="helix" evidence="5">
    <location>
        <begin position="443"/>
        <end position="448"/>
    </location>
</feature>
<feature type="turn" evidence="5">
    <location>
        <begin position="449"/>
        <end position="452"/>
    </location>
</feature>
<feature type="helix" evidence="5">
    <location>
        <begin position="456"/>
        <end position="459"/>
    </location>
</feature>
<feature type="strand" evidence="5">
    <location>
        <begin position="460"/>
        <end position="462"/>
    </location>
</feature>
<feature type="turn" evidence="5">
    <location>
        <begin position="463"/>
        <end position="465"/>
    </location>
</feature>
<feature type="strand" evidence="5">
    <location>
        <begin position="466"/>
        <end position="468"/>
    </location>
</feature>
<feature type="turn" evidence="5">
    <location>
        <begin position="471"/>
        <end position="474"/>
    </location>
</feature>
<feature type="helix" evidence="5">
    <location>
        <begin position="477"/>
        <end position="489"/>
    </location>
</feature>
<feature type="strand" evidence="5">
    <location>
        <begin position="494"/>
        <end position="500"/>
    </location>
</feature>
<feature type="turn" evidence="5">
    <location>
        <begin position="501"/>
        <end position="504"/>
    </location>
</feature>
<feature type="helix" evidence="5">
    <location>
        <begin position="507"/>
        <end position="520"/>
    </location>
</feature>
<feature type="strand" evidence="5">
    <location>
        <begin position="522"/>
        <end position="524"/>
    </location>
</feature>
<feature type="strand" evidence="5">
    <location>
        <begin position="526"/>
        <end position="529"/>
    </location>
</feature>
<feature type="helix" evidence="5">
    <location>
        <begin position="535"/>
        <end position="537"/>
    </location>
</feature>
<feature type="strand" evidence="5">
    <location>
        <begin position="540"/>
        <end position="546"/>
    </location>
</feature>
<feature type="strand" evidence="5">
    <location>
        <begin position="549"/>
        <end position="554"/>
    </location>
</feature>
<feature type="helix" evidence="5">
    <location>
        <begin position="556"/>
        <end position="561"/>
    </location>
</feature>
<feature type="helix" evidence="5">
    <location>
        <begin position="565"/>
        <end position="575"/>
    </location>
</feature>
<gene>
    <name type="primary">yheI</name>
    <name type="ordered locus">BSU09710</name>
</gene>
<accession>O07550</accession>
<accession>Q796W6</accession>